<accession>C1HAE1</accession>
<proteinExistence type="inferred from homology"/>
<keyword id="KW-0963">Cytoplasm</keyword>
<keyword id="KW-0539">Nucleus</keyword>
<keyword id="KW-0653">Protein transport</keyword>
<keyword id="KW-1185">Reference proteome</keyword>
<keyword id="KW-0813">Transport</keyword>
<reference key="1">
    <citation type="journal article" date="2011" name="PLoS Genet.">
        <title>Comparative genomic analysis of human fungal pathogens causing paracoccidioidomycosis.</title>
        <authorList>
            <person name="Desjardins C.A."/>
            <person name="Champion M.D."/>
            <person name="Holder J.W."/>
            <person name="Muszewska A."/>
            <person name="Goldberg J."/>
            <person name="Bailao A.M."/>
            <person name="Brigido M.M."/>
            <person name="Ferreira M.E."/>
            <person name="Garcia A.M."/>
            <person name="Grynberg M."/>
            <person name="Gujja S."/>
            <person name="Heiman D.I."/>
            <person name="Henn M.R."/>
            <person name="Kodira C.D."/>
            <person name="Leon-Narvaez H."/>
            <person name="Longo L.V.G."/>
            <person name="Ma L.-J."/>
            <person name="Malavazi I."/>
            <person name="Matsuo A.L."/>
            <person name="Morais F.V."/>
            <person name="Pereira M."/>
            <person name="Rodriguez-Brito S."/>
            <person name="Sakthikumar S."/>
            <person name="Salem-Izacc S.M."/>
            <person name="Sykes S.M."/>
            <person name="Teixeira M.M."/>
            <person name="Vallejo M.C."/>
            <person name="Walter M.E."/>
            <person name="Yandava C."/>
            <person name="Young S."/>
            <person name="Zeng Q."/>
            <person name="Zucker J."/>
            <person name="Felipe M.S."/>
            <person name="Goldman G.H."/>
            <person name="Haas B.J."/>
            <person name="McEwen J.G."/>
            <person name="Nino-Vega G."/>
            <person name="Puccia R."/>
            <person name="San-Blas G."/>
            <person name="Soares C.M."/>
            <person name="Birren B.W."/>
            <person name="Cuomo C.A."/>
        </authorList>
    </citation>
    <scope>NUCLEOTIDE SEQUENCE [LARGE SCALE GENOMIC DNA]</scope>
    <source>
        <strain>ATCC MYA-826 / Pb01</strain>
    </source>
</reference>
<gene>
    <name type="primary">STS1</name>
    <name type="ORF">PAAG_07595</name>
</gene>
<name>STS1_PARBA</name>
<protein>
    <recommendedName>
        <fullName>Tethering factor for nuclear proteasome STS1</fullName>
    </recommendedName>
</protein>
<comment type="function">
    <text evidence="1">Involved in ubiquitin-mediated protein degradation. Regulatory factor in the ubiquitin/proteasome pathway that controls the turnover of proteasome substrates. Targets proteasomes to the nucleus and facilitates the degradation of nuclear proteins (By similarity).</text>
</comment>
<comment type="subunit">
    <text evidence="1">Binds the proteasome.</text>
</comment>
<comment type="subcellular location">
    <subcellularLocation>
        <location evidence="1">Cytoplasm</location>
    </subcellularLocation>
    <subcellularLocation>
        <location evidence="1">Nucleus</location>
    </subcellularLocation>
</comment>
<comment type="similarity">
    <text evidence="3">Belongs to the cut8/STS1 family.</text>
</comment>
<organism>
    <name type="scientific">Paracoccidioides lutzii (strain ATCC MYA-826 / Pb01)</name>
    <name type="common">Paracoccidioides brasiliensis</name>
    <dbReference type="NCBI Taxonomy" id="502779"/>
    <lineage>
        <taxon>Eukaryota</taxon>
        <taxon>Fungi</taxon>
        <taxon>Dikarya</taxon>
        <taxon>Ascomycota</taxon>
        <taxon>Pezizomycotina</taxon>
        <taxon>Eurotiomycetes</taxon>
        <taxon>Eurotiomycetidae</taxon>
        <taxon>Onygenales</taxon>
        <taxon>Ajellomycetaceae</taxon>
        <taxon>Paracoccidioides</taxon>
    </lineage>
</organism>
<evidence type="ECO:0000250" key="1"/>
<evidence type="ECO:0000256" key="2">
    <source>
        <dbReference type="SAM" id="MobiDB-lite"/>
    </source>
</evidence>
<evidence type="ECO:0000305" key="3"/>
<feature type="chain" id="PRO_0000409420" description="Tethering factor for nuclear proteasome STS1">
    <location>
        <begin position="1"/>
        <end position="311"/>
    </location>
</feature>
<feature type="region of interest" description="Disordered" evidence="2">
    <location>
        <begin position="24"/>
        <end position="84"/>
    </location>
</feature>
<feature type="compositionally biased region" description="Basic and acidic residues" evidence="2">
    <location>
        <begin position="38"/>
        <end position="50"/>
    </location>
</feature>
<feature type="compositionally biased region" description="Low complexity" evidence="2">
    <location>
        <begin position="52"/>
        <end position="70"/>
    </location>
</feature>
<sequence>MNSLLATPPVPPHFYEHVRLSPSWSMSSANSSGNRKRKAEDDNPSDHDTRMSASPSNSPALAPRPLPTARQIKRPRPNISGRPLPLSRLLETLDTDALRSVLRSMCNRHPELETEVVHTAPRPSVSSALQVLSNYESTLQSSFPLGGNSSSDYAYNRVRQHITNLLDALNDFTPHFLPPNESQVSTALNYLDGATEILHRLPRWDTPQHNLEKDVAYEEIAKAWIVVIREAGKRGGGIQLQYGGWDLKLSKHNQTAGGKLQDAINVLSSSLCWMGGHQDSSASQGGDPTSIRHQLLSGTYGSSSPLKVSKW</sequence>
<dbReference type="EMBL" id="KN294017">
    <property type="protein sequence ID" value="EEH37314.1"/>
    <property type="molecule type" value="Genomic_DNA"/>
</dbReference>
<dbReference type="RefSeq" id="XP_002790296.1">
    <property type="nucleotide sequence ID" value="XM_002790250.2"/>
</dbReference>
<dbReference type="SMR" id="C1HAE1"/>
<dbReference type="STRING" id="502779.C1HAE1"/>
<dbReference type="GeneID" id="9093480"/>
<dbReference type="KEGG" id="pbl:PAAG_07595"/>
<dbReference type="VEuPathDB" id="FungiDB:PAAG_07595"/>
<dbReference type="eggNOG" id="ENOG502RNK4">
    <property type="taxonomic scope" value="Eukaryota"/>
</dbReference>
<dbReference type="HOGENOM" id="CLU_033658_0_0_1"/>
<dbReference type="OMA" id="DYTPHFL"/>
<dbReference type="OrthoDB" id="10061064at2759"/>
<dbReference type="Proteomes" id="UP000002059">
    <property type="component" value="Partially assembled WGS sequence"/>
</dbReference>
<dbReference type="GO" id="GO:0005737">
    <property type="term" value="C:cytoplasm"/>
    <property type="evidence" value="ECO:0007669"/>
    <property type="project" value="UniProtKB-SubCell"/>
</dbReference>
<dbReference type="GO" id="GO:0031965">
    <property type="term" value="C:nuclear membrane"/>
    <property type="evidence" value="ECO:0007669"/>
    <property type="project" value="TreeGrafter"/>
</dbReference>
<dbReference type="GO" id="GO:0070628">
    <property type="term" value="F:proteasome binding"/>
    <property type="evidence" value="ECO:0007669"/>
    <property type="project" value="TreeGrafter"/>
</dbReference>
<dbReference type="GO" id="GO:0071630">
    <property type="term" value="P:nuclear protein quality control by the ubiquitin-proteasome system"/>
    <property type="evidence" value="ECO:0007669"/>
    <property type="project" value="InterPro"/>
</dbReference>
<dbReference type="GO" id="GO:0031144">
    <property type="term" value="P:proteasome localization"/>
    <property type="evidence" value="ECO:0007669"/>
    <property type="project" value="InterPro"/>
</dbReference>
<dbReference type="GO" id="GO:0015031">
    <property type="term" value="P:protein transport"/>
    <property type="evidence" value="ECO:0007669"/>
    <property type="project" value="UniProtKB-KW"/>
</dbReference>
<dbReference type="FunFam" id="1.20.58.1590:FF:000001">
    <property type="entry name" value="Tethering factor for nuclear proteasome STS1"/>
    <property type="match status" value="1"/>
</dbReference>
<dbReference type="Gene3D" id="1.20.58.1590">
    <property type="entry name" value="Tethering factor for nuclear proteasome Cut8/Sts1"/>
    <property type="match status" value="1"/>
</dbReference>
<dbReference type="InterPro" id="IPR013868">
    <property type="entry name" value="Cut8/Sts1_fam"/>
</dbReference>
<dbReference type="InterPro" id="IPR038422">
    <property type="entry name" value="Cut8/Sts1_sf"/>
</dbReference>
<dbReference type="PANTHER" id="PTHR28032">
    <property type="entry name" value="FI02826P"/>
    <property type="match status" value="1"/>
</dbReference>
<dbReference type="PANTHER" id="PTHR28032:SF1">
    <property type="entry name" value="FI02826P"/>
    <property type="match status" value="1"/>
</dbReference>
<dbReference type="Pfam" id="PF08559">
    <property type="entry name" value="Cut8"/>
    <property type="match status" value="1"/>
</dbReference>